<feature type="chain" id="PRO_0000046890" description="Zinc finger protein sdc-1">
    <location>
        <begin position="1"/>
        <end position="1201"/>
    </location>
</feature>
<feature type="zinc finger region" description="C2H2-type 1" evidence="1">
    <location>
        <begin position="117"/>
        <end position="139"/>
    </location>
</feature>
<feature type="zinc finger region" description="C2H2-type 2" evidence="1">
    <location>
        <begin position="145"/>
        <end position="168"/>
    </location>
</feature>
<feature type="zinc finger region" description="C2H2-type 3" evidence="1">
    <location>
        <begin position="233"/>
        <end position="254"/>
    </location>
</feature>
<feature type="zinc finger region" description="C2H2-type 4" evidence="1">
    <location>
        <begin position="268"/>
        <end position="290"/>
    </location>
</feature>
<feature type="zinc finger region" description="C2H2-type 5" evidence="1">
    <location>
        <begin position="486"/>
        <end position="513"/>
    </location>
</feature>
<feature type="zinc finger region" description="C2H2-type 6" evidence="1">
    <location>
        <begin position="521"/>
        <end position="543"/>
    </location>
</feature>
<feature type="zinc finger region" description="C2H2-type 7" evidence="1">
    <location>
        <begin position="652"/>
        <end position="674"/>
    </location>
</feature>
<feature type="region of interest" description="Disordered" evidence="2">
    <location>
        <begin position="1164"/>
        <end position="1201"/>
    </location>
</feature>
<feature type="compositionally biased region" description="Basic and acidic residues" evidence="2">
    <location>
        <begin position="1167"/>
        <end position="1176"/>
    </location>
</feature>
<feature type="sequence conflict" description="In Ref. 1; CAA41410." evidence="7" ref="1">
    <original>D</original>
    <variation>V</variation>
    <location>
        <position position="16"/>
    </location>
</feature>
<feature type="sequence conflict" description="In Ref. 1; CAA41410." evidence="7" ref="1">
    <original>Q</original>
    <variation>QLQ</variation>
    <location>
        <position position="181"/>
    </location>
</feature>
<feature type="sequence conflict" description="In Ref. 1; CAA41410." evidence="7" ref="1">
    <original>KT</original>
    <variation>FS</variation>
    <location>
        <begin position="942"/>
        <end position="943"/>
    </location>
</feature>
<protein>
    <recommendedName>
        <fullName>Zinc finger protein sdc-1</fullName>
    </recommendedName>
    <alternativeName>
        <fullName>Egg-laying defective protein 16</fullName>
    </alternativeName>
</protein>
<gene>
    <name type="primary">sdc-1</name>
    <name type="synonym">egl-16</name>
    <name type="ORF">F52E10.1</name>
</gene>
<organism>
    <name type="scientific">Caenorhabditis elegans</name>
    <dbReference type="NCBI Taxonomy" id="6239"/>
    <lineage>
        <taxon>Eukaryota</taxon>
        <taxon>Metazoa</taxon>
        <taxon>Ecdysozoa</taxon>
        <taxon>Nematoda</taxon>
        <taxon>Chromadorea</taxon>
        <taxon>Rhabditida</taxon>
        <taxon>Rhabditina</taxon>
        <taxon>Rhabditomorpha</taxon>
        <taxon>Rhabditoidea</taxon>
        <taxon>Rhabditidae</taxon>
        <taxon>Peloderinae</taxon>
        <taxon>Caenorhabditis</taxon>
    </lineage>
</organism>
<proteinExistence type="evidence at protein level"/>
<accession>P24349</accession>
<accession>Q20672</accession>
<evidence type="ECO:0000255" key="1">
    <source>
        <dbReference type="PROSITE-ProRule" id="PRU00042"/>
    </source>
</evidence>
<evidence type="ECO:0000256" key="2">
    <source>
        <dbReference type="SAM" id="MobiDB-lite"/>
    </source>
</evidence>
<evidence type="ECO:0000269" key="3">
    <source>
    </source>
</evidence>
<evidence type="ECO:0000269" key="4">
    <source>
    </source>
</evidence>
<evidence type="ECO:0000269" key="5">
    <source>
    </source>
</evidence>
<evidence type="ECO:0000269" key="6">
    <source>
    </source>
</evidence>
<evidence type="ECO:0000305" key="7"/>
<evidence type="ECO:0000305" key="8">
    <source>
    </source>
</evidence>
<dbReference type="EMBL" id="X58520">
    <property type="protein sequence ID" value="CAA41410.1"/>
    <property type="molecule type" value="Genomic_DNA"/>
</dbReference>
<dbReference type="EMBL" id="Z54282">
    <property type="protein sequence ID" value="CAA91056.2"/>
    <property type="molecule type" value="Genomic_DNA"/>
</dbReference>
<dbReference type="PIR" id="G89734">
    <property type="entry name" value="G89734"/>
</dbReference>
<dbReference type="PIR" id="S15093">
    <property type="entry name" value="A33165"/>
</dbReference>
<dbReference type="RefSeq" id="NP_510650.2">
    <property type="nucleotide sequence ID" value="NM_078249.8"/>
</dbReference>
<dbReference type="BioGRID" id="46586">
    <property type="interactions" value="4"/>
</dbReference>
<dbReference type="ComplexPortal" id="CPX-3888">
    <property type="entry name" value="SDC complex"/>
</dbReference>
<dbReference type="FunCoup" id="P24349">
    <property type="interactions" value="699"/>
</dbReference>
<dbReference type="STRING" id="6239.F52E10.1.1"/>
<dbReference type="PaxDb" id="6239-F52E10.1"/>
<dbReference type="PeptideAtlas" id="P24349"/>
<dbReference type="EnsemblMetazoa" id="F52E10.1a.1">
    <property type="protein sequence ID" value="F52E10.1a.1"/>
    <property type="gene ID" value="WBGene00004745"/>
</dbReference>
<dbReference type="GeneID" id="181701"/>
<dbReference type="KEGG" id="cel:CELE_F52E10.1"/>
<dbReference type="UCSC" id="F52E10.1">
    <property type="organism name" value="c. elegans"/>
</dbReference>
<dbReference type="AGR" id="WB:WBGene00004745"/>
<dbReference type="CTD" id="181701"/>
<dbReference type="WormBase" id="F52E10.1a">
    <property type="protein sequence ID" value="CE41321"/>
    <property type="gene ID" value="WBGene00004745"/>
    <property type="gene designation" value="sdc-1"/>
</dbReference>
<dbReference type="eggNOG" id="KOG1721">
    <property type="taxonomic scope" value="Eukaryota"/>
</dbReference>
<dbReference type="HOGENOM" id="CLU_270770_0_0_1"/>
<dbReference type="InParanoid" id="P24349"/>
<dbReference type="OMA" id="QEIWPLK"/>
<dbReference type="OrthoDB" id="8922241at2759"/>
<dbReference type="PRO" id="PR:P24349"/>
<dbReference type="Proteomes" id="UP000001940">
    <property type="component" value="Chromosome X"/>
</dbReference>
<dbReference type="Bgee" id="WBGene00004745">
    <property type="expression patterns" value="Expressed in embryo and 4 other cell types or tissues"/>
</dbReference>
<dbReference type="ExpressionAtlas" id="P24349">
    <property type="expression patterns" value="baseline and differential"/>
</dbReference>
<dbReference type="GO" id="GO:0000228">
    <property type="term" value="C:nuclear chromosome"/>
    <property type="evidence" value="ECO:0000314"/>
    <property type="project" value="WormBase"/>
</dbReference>
<dbReference type="GO" id="GO:0005634">
    <property type="term" value="C:nucleus"/>
    <property type="evidence" value="ECO:0000318"/>
    <property type="project" value="GO_Central"/>
</dbReference>
<dbReference type="GO" id="GO:0000805">
    <property type="term" value="C:X chromosome"/>
    <property type="evidence" value="ECO:0000314"/>
    <property type="project" value="ComplexPortal"/>
</dbReference>
<dbReference type="GO" id="GO:0000981">
    <property type="term" value="F:DNA-binding transcription factor activity, RNA polymerase II-specific"/>
    <property type="evidence" value="ECO:0000318"/>
    <property type="project" value="GO_Central"/>
</dbReference>
<dbReference type="GO" id="GO:0043565">
    <property type="term" value="F:sequence-specific DNA binding"/>
    <property type="evidence" value="ECO:0000318"/>
    <property type="project" value="GO_Central"/>
</dbReference>
<dbReference type="GO" id="GO:0008270">
    <property type="term" value="F:zinc ion binding"/>
    <property type="evidence" value="ECO:0007669"/>
    <property type="project" value="UniProtKB-KW"/>
</dbReference>
<dbReference type="GO" id="GO:0030154">
    <property type="term" value="P:cell differentiation"/>
    <property type="evidence" value="ECO:0007669"/>
    <property type="project" value="UniProtKB-KW"/>
</dbReference>
<dbReference type="GO" id="GO:0042464">
    <property type="term" value="P:dosage compensation by hypoactivation of X chromosome"/>
    <property type="evidence" value="ECO:0000315"/>
    <property type="project" value="WormBase"/>
</dbReference>
<dbReference type="GO" id="GO:0010629">
    <property type="term" value="P:negative regulation of gene expression"/>
    <property type="evidence" value="ECO:0000303"/>
    <property type="project" value="ComplexPortal"/>
</dbReference>
<dbReference type="GO" id="GO:0000122">
    <property type="term" value="P:negative regulation of transcription by RNA polymerase II"/>
    <property type="evidence" value="ECO:0000315"/>
    <property type="project" value="WormBase"/>
</dbReference>
<dbReference type="GO" id="GO:0006357">
    <property type="term" value="P:regulation of transcription by RNA polymerase II"/>
    <property type="evidence" value="ECO:0000318"/>
    <property type="project" value="GO_Central"/>
</dbReference>
<dbReference type="GO" id="GO:0007530">
    <property type="term" value="P:sex determination"/>
    <property type="evidence" value="ECO:0000315"/>
    <property type="project" value="WormBase"/>
</dbReference>
<dbReference type="GO" id="GO:0007548">
    <property type="term" value="P:sex differentiation"/>
    <property type="evidence" value="ECO:0007669"/>
    <property type="project" value="UniProtKB-KW"/>
</dbReference>
<dbReference type="Gene3D" id="3.30.160.60">
    <property type="entry name" value="Classic Zinc Finger"/>
    <property type="match status" value="1"/>
</dbReference>
<dbReference type="InterPro" id="IPR036236">
    <property type="entry name" value="Znf_C2H2_sf"/>
</dbReference>
<dbReference type="InterPro" id="IPR013087">
    <property type="entry name" value="Znf_C2H2_type"/>
</dbReference>
<dbReference type="PANTHER" id="PTHR24379:SF121">
    <property type="entry name" value="C2H2-TYPE DOMAIN-CONTAINING PROTEIN"/>
    <property type="match status" value="1"/>
</dbReference>
<dbReference type="PANTHER" id="PTHR24379">
    <property type="entry name" value="KRAB AND ZINC FINGER DOMAIN-CONTAINING"/>
    <property type="match status" value="1"/>
</dbReference>
<dbReference type="SMART" id="SM00355">
    <property type="entry name" value="ZnF_C2H2"/>
    <property type="match status" value="4"/>
</dbReference>
<dbReference type="SUPFAM" id="SSF57667">
    <property type="entry name" value="beta-beta-alpha zinc fingers"/>
    <property type="match status" value="1"/>
</dbReference>
<dbReference type="PROSITE" id="PS00028">
    <property type="entry name" value="ZINC_FINGER_C2H2_1"/>
    <property type="match status" value="2"/>
</dbReference>
<dbReference type="PROSITE" id="PS50157">
    <property type="entry name" value="ZINC_FINGER_C2H2_2"/>
    <property type="match status" value="1"/>
</dbReference>
<keyword id="KW-0158">Chromosome</keyword>
<keyword id="KW-0217">Developmental protein</keyword>
<keyword id="KW-0221">Differentiation</keyword>
<keyword id="KW-0238">DNA-binding</keyword>
<keyword id="KW-0479">Metal-binding</keyword>
<keyword id="KW-0539">Nucleus</keyword>
<keyword id="KW-1185">Reference proteome</keyword>
<keyword id="KW-0677">Repeat</keyword>
<keyword id="KW-0726">Sexual differentiation</keyword>
<keyword id="KW-0804">Transcription</keyword>
<keyword id="KW-0805">Transcription regulation</keyword>
<keyword id="KW-0862">Zinc</keyword>
<keyword id="KW-0863">Zinc-finger</keyword>
<sequence length="1201" mass="139056">MSDEEDIDESFEIEEDGISITDARGNSLKAQQIAGKERNLDPEADDLEVVVNFYEAGDGTFQLQLPKLTAVKPVDKVNDVLDFINFDKKVCDGIHSSIKLVSQRDQTGPAPFPKHKLTCAHCDWSFDNVMKLVRHRGVHKNVGVYMCQVCLTLFGHTYNLFMHWRTSCSQTSTTATDIEIQKAETPYLHRNVLNVLGSLNRASQYYCTGGYVFLPSDWCITNKEIVMEKDHMSSCHLCHLPVPNKFLEAHGNVHRGRFRIDGRIYGDYFCHICGTVFIEQDNLFKHWRLHCEEVIAYTPVDQYLSNTELATLAWLVLQTTISQADIECLRVSSSLITEKLAKEHAERHGIANSMHKYYHFPQEIWPLKTFVNLDLVNDAIPISGENSFKIKDPKRPVHIMNLLATACPGFYATGKTFNMICSTKKSESDTKKVYRVILRYTTEGSVIQSYDFTARSFPKLRVDSETPEGVFSHPLADFNVESNEAIVCHKCDSKKLTITFSTEVRLKYHLLRHSESRKDGYHCAICKIIVYNRSHEEHWINDCIPLQKLYRDQKDRECFDAEFAAKCASIIKKLRIRTLIRWKERANEDWVETKQTPDRIGEDFAIKFQVGTTALKTLMAGLEEHYKNAQARHEAYKYSEENFLPPLSTPVVVCFHCGTRCHYTLLHDHLDYCHYWPRNKRLVNEEFHKWKKNGCRNTWRVMKSVAEAMQIEVPFISEEQYSKILDYHTYFCNDTRYKVQDSINNWNDCSTIRDVDLSEKLSVAEIVQKGEDSVMAPEPDIIKNVYFPSARIITDNMLLRMTEINLNDVVQRDPITKEELTGKFKEVQDEQDAILFGDYRAVLRSKGIMVNSISDFVAPPDELAKAKASQESAGQESVDHRNRREREFIQQYMGKDLALEAAARENGRLVEVDEEAEDYELTPKELNARRLVERNRHREMCKTRCEHGEYDYEKFKARQVPINPAKMKERKYLTRVVHESGPDDDVCPDEPENNIIAFSPKYENSLSDFRISAIGFREKYLADDKKKRNGIPIRKMTEAQKGVALDYDTLMARHGGRPDVIMNPAGTVFVGGFVFDRKPTCQDNMQTVYVLRNGYAHRYRIYHCEDTNGIYKFVWPQEQSFDPDSLAKSARVRMVKQVKSPEHMIHHIEEIDESIGHNYRLNRKRRNSETREHELIELDTDDLNEPSTSDGRYSFGHHGYR</sequence>
<name>SDC1_CAEEL</name>
<reference key="1">
    <citation type="journal article" date="1991" name="Nature">
        <title>Early aspects of Caenorhabditis elegans sex determination and dosage compensation are regulated by a zinc-finger protein.</title>
        <authorList>
            <person name="Nonet M.L."/>
            <person name="Meyer B.J."/>
        </authorList>
    </citation>
    <scope>NUCLEOTIDE SEQUENCE [GENOMIC DNA]</scope>
    <scope>FUNCTION</scope>
    <source>
        <strain>Bristol N2</strain>
    </source>
</reference>
<reference key="2">
    <citation type="journal article" date="1998" name="Science">
        <title>Genome sequence of the nematode C. elegans: a platform for investigating biology.</title>
        <authorList>
            <consortium name="The C. elegans sequencing consortium"/>
        </authorList>
    </citation>
    <scope>NUCLEOTIDE SEQUENCE [LARGE SCALE GENOMIC DNA]</scope>
    <source>
        <strain>Bristol N2</strain>
    </source>
</reference>
<reference key="3">
    <citation type="journal article" date="2002" name="Genes Dev.">
        <title>A molecular link between gene-specific and chromosome-wide transcriptional repression.</title>
        <authorList>
            <person name="Chu D.S."/>
            <person name="Dawes H.E."/>
            <person name="Lieb J.D."/>
            <person name="Chan R.C."/>
            <person name="Kuo A.F."/>
            <person name="Meyer B.J."/>
        </authorList>
    </citation>
    <scope>FUNCTION</scope>
    <scope>IDENTIFICATION IN A SDC COMPLEX</scope>
    <scope>INTERACTION WITH SDC-2 AND SDC-3</scope>
    <scope>SUBCELLULAR LOCATION</scope>
</reference>
<reference key="4">
    <citation type="journal article" date="2012" name="Mol. Cell. Biol.">
        <title>Caenorhabditis elegans dosage compensation regulates histone H4 chromatin state on X chromosomes.</title>
        <authorList>
            <person name="Wells M.B."/>
            <person name="Snyder M.J."/>
            <person name="Custer L.M."/>
            <person name="Csankovszki G."/>
        </authorList>
    </citation>
    <scope>FUNCTION</scope>
    <scope>SUBCELLULAR LOCATION</scope>
</reference>
<reference key="5">
    <citation type="journal article" date="2013" name="Development">
        <title>A non-canonical role for the C. elegans dosage compensation complex in growth and metabolic regulation downstream of TOR complex 2.</title>
        <authorList>
            <person name="Webster C.M."/>
            <person name="Wu L."/>
            <person name="Douglas D."/>
            <person name="Soukas A.A."/>
        </authorList>
    </citation>
    <scope>FUNCTION</scope>
    <scope>DISRUPTION PHENOTYPE</scope>
</reference>
<comment type="function">
    <text evidence="3 4 5 6">Embryonic transcription factor regulating downstream genes involved specifically in the sex determination and dosage compensation pathways, or regulating other genes involved in the coordinate control of both processes (PubMed:2027384). Component of the SDC complex that functions in sex determination and in X chromosome dosage compensation specifically in hermaphrodite (XX) animals (PubMed:11937488). Involved in the recruitment of the condensin I-like dosage compensation complex to the male sex-determining autosomal gene her-1, thereby contributing to its repression and initiating hermaphrodite sexual development (PubMed:11937488). Similarly, might contribute to X-linked gene repression through recruitment of the dosage compensation complex to the X chromosomes in hermaphrodites (PubMed:11937488). Seems to be involved in the depletion of histone H4 lysine 16 acetylation (H4K16ac) on dosage compensated X chromosomes (PubMed:22393255). Plays a role in developmental rate and body fat regulation downstream of the TOR complex 2 pathway (PubMed:23884442).</text>
</comment>
<comment type="subunit">
    <text evidence="3">Component of the SDC complex, which consists of sdc-1, sdc-2 and sdc-3. Within the complex, interacts with sdc-2 and sdc-3.</text>
</comment>
<comment type="subcellular location">
    <subcellularLocation>
        <location evidence="3 8">Nucleus</location>
    </subcellularLocation>
    <subcellularLocation>
        <location evidence="3">Chromosome</location>
    </subcellularLocation>
    <text evidence="3">Localizes to X chromosomes in hermaphrodite (XX) animals.</text>
</comment>
<comment type="disruption phenotype">
    <text evidence="6">In the TOR complex 2 mutant background rict-1, RNAi-mediated knockdown suppresses the growth delay and elevated body fat index.</text>
</comment>